<gene>
    <name type="primary">smpd4</name>
</gene>
<proteinExistence type="evidence at transcript level"/>
<sequence>MLLAGGSPQPSFLLGSLKADCVTKPFLQRCQDLVRVIEDFPAKELHAIFPWLIETVFGSLDGSILGWNLRGLHERINPLEFHTALEFLDPSGAMMKLVYKLQAEEYKYDFPVSFLPGPVRASIQERVLPECPLYHNKIQFPASGGVSFNLALNSFEYFMFHFAFCLLKQRNYPQGLHFSTADSAYYILVDKYLKWFLPVEGNVPPPHSPNTGGTVPSPAPRSPSLSFTSYGSHTSLLKRHISHQHLVNADPAAQEIWRTETLLQVFVEIWLHHYSLEMYQKMQSPNAKLEALHNRLSVSSAPPIYPALPGSLHSYQELFQPTEEHVLVVRLLVKHLHTFSNSIRPEQVSPSTHSHTASPLEELKRVVVPRFIQQKLYIFLQHCFGHWPLDASFRAVLEMWLSYVQPWRYVLERSSPVSGEMQNRNVPEKWSTFVQENLLFYTKLFLRFLSRALRTDLVNPKNALMVFRAAKVFSQLNLPEMILNGEQLFLKPEHVIPHRQHRLLLTPNLGGSFLSSWQPPITDTSLKVKSHVFSLEGQDCQYMQMFGPEARNLVLRLAQMISQAKQTAKSISNHSPDSSANQSFLSWFGLGSPDFNGSYNGSDLDEAGYDTIRKTDEHLEKALDYFCQIFRLNPTQLGQLTANVDSSQDDDGKNKLPDCIQSEDGVVLTSLGRYQIINGLRKFDIEYQGDPELQPIRSYENAMLVRYLYRLSSVINKRFANSMGALCARKDFLGKLCRHHLTSSSRKCKKSPITSVSPSEPAAPHIRLRFLASYRTLAFLFIFYILGSLLSLGPLICTFLLLIGCMFYAIVQTLLSEEQKPHNN</sequence>
<accession>Q5XHG1</accession>
<accession>Q4V7Y8</accession>
<feature type="chain" id="PRO_0000273166" description="Sphingomyelin phosphodiesterase 4">
    <location>
        <begin position="1"/>
        <end position="824"/>
    </location>
</feature>
<feature type="transmembrane region" description="Helical" evidence="3">
    <location>
        <begin position="777"/>
        <end position="797"/>
    </location>
</feature>
<feature type="splice variant" id="VSP_022488" description="In isoform 2." evidence="4">
    <location>
        <begin position="289"/>
        <end position="316"/>
    </location>
</feature>
<organism>
    <name type="scientific">Xenopus laevis</name>
    <name type="common">African clawed frog</name>
    <dbReference type="NCBI Taxonomy" id="8355"/>
    <lineage>
        <taxon>Eukaryota</taxon>
        <taxon>Metazoa</taxon>
        <taxon>Chordata</taxon>
        <taxon>Craniata</taxon>
        <taxon>Vertebrata</taxon>
        <taxon>Euteleostomi</taxon>
        <taxon>Amphibia</taxon>
        <taxon>Batrachia</taxon>
        <taxon>Anura</taxon>
        <taxon>Pipoidea</taxon>
        <taxon>Pipidae</taxon>
        <taxon>Xenopodinae</taxon>
        <taxon>Xenopus</taxon>
        <taxon>Xenopus</taxon>
    </lineage>
</organism>
<keyword id="KW-0025">Alternative splicing</keyword>
<keyword id="KW-1003">Cell membrane</keyword>
<keyword id="KW-0256">Endoplasmic reticulum</keyword>
<keyword id="KW-0333">Golgi apparatus</keyword>
<keyword id="KW-0378">Hydrolase</keyword>
<keyword id="KW-0443">Lipid metabolism</keyword>
<keyword id="KW-0460">Magnesium</keyword>
<keyword id="KW-0472">Membrane</keyword>
<keyword id="KW-0479">Metal-binding</keyword>
<keyword id="KW-0539">Nucleus</keyword>
<keyword id="KW-1185">Reference proteome</keyword>
<keyword id="KW-0812">Transmembrane</keyword>
<keyword id="KW-1133">Transmembrane helix</keyword>
<reference key="1">
    <citation type="submission" date="2004-10" db="EMBL/GenBank/DDBJ databases">
        <authorList>
            <consortium name="NIH - Xenopus Gene Collection (XGC) project"/>
        </authorList>
    </citation>
    <scope>NUCLEOTIDE SEQUENCE [LARGE SCALE MRNA] (ISOFORMS 1 AND 2)</scope>
    <source>
        <tissue>Kidney</tissue>
        <tissue>Ovary</tissue>
    </source>
</reference>
<name>NSMA3_XENLA</name>
<evidence type="ECO:0000250" key="1">
    <source>
        <dbReference type="UniProtKB" id="Q6ZPR5"/>
    </source>
</evidence>
<evidence type="ECO:0000250" key="2">
    <source>
        <dbReference type="UniProtKB" id="Q9NXE4"/>
    </source>
</evidence>
<evidence type="ECO:0000255" key="3"/>
<evidence type="ECO:0000303" key="4">
    <source ref="1"/>
</evidence>
<evidence type="ECO:0000305" key="5"/>
<comment type="function">
    <text evidence="2">Catalyzes the hydrolysis of membrane sphingomyelin to form phosphorylcholine and ceramide. It has a relevant role in the homeostasis of membrane sphingolipids, thereby influencing membrane integrity, and endoplasmic reticulum organization and function. May sensitize cells to DNA damage-induced apoptosis.</text>
</comment>
<comment type="catalytic activity">
    <reaction evidence="2">
        <text>a sphingomyelin + H2O = phosphocholine + an N-acylsphing-4-enine + H(+)</text>
        <dbReference type="Rhea" id="RHEA:19253"/>
        <dbReference type="ChEBI" id="CHEBI:15377"/>
        <dbReference type="ChEBI" id="CHEBI:15378"/>
        <dbReference type="ChEBI" id="CHEBI:17636"/>
        <dbReference type="ChEBI" id="CHEBI:52639"/>
        <dbReference type="ChEBI" id="CHEBI:295975"/>
        <dbReference type="EC" id="3.1.4.12"/>
    </reaction>
    <physiologicalReaction direction="left-to-right" evidence="2">
        <dbReference type="Rhea" id="RHEA:19254"/>
    </physiologicalReaction>
</comment>
<comment type="cofactor">
    <cofactor evidence="2">
        <name>Mg(2+)</name>
        <dbReference type="ChEBI" id="CHEBI:18420"/>
    </cofactor>
</comment>
<comment type="subcellular location">
    <subcellularLocation>
        <location evidence="2">Endoplasmic reticulum membrane</location>
        <topology evidence="3">Single-pass membrane protein</topology>
    </subcellularLocation>
    <subcellularLocation>
        <location evidence="2">Golgi apparatus membrane</location>
        <topology evidence="3">Single-pass membrane protein</topology>
    </subcellularLocation>
    <subcellularLocation>
        <location evidence="2">Nucleus envelope</location>
    </subcellularLocation>
    <subcellularLocation>
        <location evidence="1">Cell membrane</location>
        <location evidence="1">Sarcolemma</location>
    </subcellularLocation>
</comment>
<comment type="alternative products">
    <event type="alternative splicing"/>
    <isoform>
        <id>Q5XHG1-1</id>
        <name>1</name>
        <sequence type="displayed"/>
    </isoform>
    <isoform>
        <id>Q5XHG1-2</id>
        <name>2</name>
        <sequence type="described" ref="VSP_022488"/>
    </isoform>
</comment>
<comment type="sequence caution" evidence="5">
    <conflict type="erroneous initiation">
        <sequence resource="EMBL-CDS" id="AAH84096"/>
    </conflict>
    <text>Extended N-terminus.</text>
</comment>
<protein>
    <recommendedName>
        <fullName>Sphingomyelin phosphodiesterase 4</fullName>
        <ecNumber>3.1.4.12</ecNumber>
    </recommendedName>
    <alternativeName>
        <fullName>Neutral sphingomyelinase 3</fullName>
        <shortName>nSMase-3</shortName>
        <shortName>nSMase3</shortName>
    </alternativeName>
    <alternativeName>
        <fullName>Neutral sphingomyelinase III</fullName>
    </alternativeName>
</protein>
<dbReference type="EC" id="3.1.4.12"/>
<dbReference type="EMBL" id="BC084096">
    <property type="protein sequence ID" value="AAH84096.1"/>
    <property type="status" value="ALT_INIT"/>
    <property type="molecule type" value="mRNA"/>
</dbReference>
<dbReference type="EMBL" id="BC097653">
    <property type="protein sequence ID" value="AAH97653.1"/>
    <property type="molecule type" value="mRNA"/>
</dbReference>
<dbReference type="RefSeq" id="NP_001088184.1">
    <molecule id="Q5XHG1-2"/>
    <property type="nucleotide sequence ID" value="NM_001094715.1"/>
</dbReference>
<dbReference type="SMR" id="Q5XHG1"/>
<dbReference type="DNASU" id="495009"/>
<dbReference type="GeneID" id="495009"/>
<dbReference type="KEGG" id="xla:495009"/>
<dbReference type="AGR" id="Xenbase:XB-GENE-962471"/>
<dbReference type="CTD" id="495009"/>
<dbReference type="Xenbase" id="XB-GENE-962471">
    <property type="gene designation" value="smpd4.L"/>
</dbReference>
<dbReference type="OMA" id="EERGKIH"/>
<dbReference type="OrthoDB" id="10251508at2759"/>
<dbReference type="Proteomes" id="UP000186698">
    <property type="component" value="Chromosome 1L"/>
</dbReference>
<dbReference type="Bgee" id="495009">
    <property type="expression patterns" value="Expressed in egg cell and 19 other cell types or tissues"/>
</dbReference>
<dbReference type="GO" id="GO:0005783">
    <property type="term" value="C:endoplasmic reticulum"/>
    <property type="evidence" value="ECO:0000250"/>
    <property type="project" value="UniProtKB"/>
</dbReference>
<dbReference type="GO" id="GO:0005789">
    <property type="term" value="C:endoplasmic reticulum membrane"/>
    <property type="evidence" value="ECO:0007669"/>
    <property type="project" value="UniProtKB-SubCell"/>
</dbReference>
<dbReference type="GO" id="GO:0000139">
    <property type="term" value="C:Golgi membrane"/>
    <property type="evidence" value="ECO:0007669"/>
    <property type="project" value="UniProtKB-SubCell"/>
</dbReference>
<dbReference type="GO" id="GO:0005635">
    <property type="term" value="C:nuclear envelope"/>
    <property type="evidence" value="ECO:0000250"/>
    <property type="project" value="UniProtKB"/>
</dbReference>
<dbReference type="GO" id="GO:0042383">
    <property type="term" value="C:sarcolemma"/>
    <property type="evidence" value="ECO:0000250"/>
    <property type="project" value="UniProtKB"/>
</dbReference>
<dbReference type="GO" id="GO:0046872">
    <property type="term" value="F:metal ion binding"/>
    <property type="evidence" value="ECO:0007669"/>
    <property type="project" value="UniProtKB-KW"/>
</dbReference>
<dbReference type="GO" id="GO:0004767">
    <property type="term" value="F:sphingomyelin phosphodiesterase activity"/>
    <property type="evidence" value="ECO:0000250"/>
    <property type="project" value="UniProtKB"/>
</dbReference>
<dbReference type="GO" id="GO:0050290">
    <property type="term" value="F:sphingomyelin phosphodiesterase D activity"/>
    <property type="evidence" value="ECO:0000318"/>
    <property type="project" value="GO_Central"/>
</dbReference>
<dbReference type="GO" id="GO:0071356">
    <property type="term" value="P:cellular response to tumor necrosis factor"/>
    <property type="evidence" value="ECO:0000250"/>
    <property type="project" value="UniProtKB"/>
</dbReference>
<dbReference type="GO" id="GO:0046513">
    <property type="term" value="P:ceramide biosynthetic process"/>
    <property type="evidence" value="ECO:0000250"/>
    <property type="project" value="UniProtKB"/>
</dbReference>
<dbReference type="GO" id="GO:0046475">
    <property type="term" value="P:glycerophospholipid catabolic process"/>
    <property type="evidence" value="ECO:0000318"/>
    <property type="project" value="GO_Central"/>
</dbReference>
<dbReference type="GO" id="GO:0006685">
    <property type="term" value="P:sphingomyelin catabolic process"/>
    <property type="evidence" value="ECO:0000250"/>
    <property type="project" value="UniProtKB"/>
</dbReference>
<dbReference type="InterPro" id="IPR024129">
    <property type="entry name" value="Sphingomy_SMPD4"/>
</dbReference>
<dbReference type="PANTHER" id="PTHR12988">
    <property type="entry name" value="SPHINGOMYELIN PHOSPHODIESTERASE 4"/>
    <property type="match status" value="1"/>
</dbReference>
<dbReference type="PANTHER" id="PTHR12988:SF6">
    <property type="entry name" value="SPHINGOMYELIN PHOSPHODIESTERASE 4"/>
    <property type="match status" value="1"/>
</dbReference>
<dbReference type="Pfam" id="PF14724">
    <property type="entry name" value="mit_SMPDase"/>
    <property type="match status" value="1"/>
</dbReference>